<sequence length="261" mass="26767">MSRVADTIARRKGEAAGALIGYLPAGFPDLRTSVDAAVALAENGVDVIELGLPYSDPVMDGAVIQAATQRALANGFRLRDGFAAVREITSRVDAPVLVMTYWNPVMQYGVDRFADDFATAGGAGLITPDLIPDEGADWLAASERTGLDRVFLAAPSSTEARRRQTAANSRGFVYAVSTMGITGVRTDVDAAARTLVGRLREAGALSACVGLGISSAAQVAEVLDYADGAIVGSALVTALAKGGVAAAGRIAAELARGAVRG</sequence>
<name>TRPA_LEIXX</name>
<reference key="1">
    <citation type="journal article" date="2004" name="Mol. Plant Microbe Interact.">
        <title>The genome sequence of the Gram-positive sugarcane pathogen Leifsonia xyli subsp. xyli.</title>
        <authorList>
            <person name="Monteiro-Vitorello C.B."/>
            <person name="Camargo L.E.A."/>
            <person name="Van Sluys M.A."/>
            <person name="Kitajima J.P."/>
            <person name="Truffi D."/>
            <person name="do Amaral A.M."/>
            <person name="Harakava R."/>
            <person name="de Oliveira J.C.F."/>
            <person name="Wood D."/>
            <person name="de Oliveira M.C."/>
            <person name="Miyaki C.Y."/>
            <person name="Takita M.A."/>
            <person name="da Silva A.C.R."/>
            <person name="Furlan L.R."/>
            <person name="Carraro D.M."/>
            <person name="Camarotte G."/>
            <person name="Almeida N.F. Jr."/>
            <person name="Carrer H."/>
            <person name="Coutinho L.L."/>
            <person name="El-Dorry H.A."/>
            <person name="Ferro M.I.T."/>
            <person name="Gagliardi P.R."/>
            <person name="Giglioti E."/>
            <person name="Goldman M.H.S."/>
            <person name="Goldman G.H."/>
            <person name="Kimura E.T."/>
            <person name="Ferro E.S."/>
            <person name="Kuramae E.E."/>
            <person name="Lemos E.G.M."/>
            <person name="Lemos M.V.F."/>
            <person name="Mauro S.M.Z."/>
            <person name="Machado M.A."/>
            <person name="Marino C.L."/>
            <person name="Menck C.F."/>
            <person name="Nunes L.R."/>
            <person name="Oliveira R.C."/>
            <person name="Pereira G.G."/>
            <person name="Siqueira W."/>
            <person name="de Souza A.A."/>
            <person name="Tsai S.M."/>
            <person name="Zanca A.S."/>
            <person name="Simpson A.J.G."/>
            <person name="Brumbley S.M."/>
            <person name="Setubal J.C."/>
        </authorList>
    </citation>
    <scope>NUCLEOTIDE SEQUENCE [LARGE SCALE GENOMIC DNA]</scope>
    <source>
        <strain>CTCB07</strain>
    </source>
</reference>
<accession>Q6AF66</accession>
<protein>
    <recommendedName>
        <fullName evidence="1">Tryptophan synthase alpha chain</fullName>
        <ecNumber evidence="1">4.2.1.20</ecNumber>
    </recommendedName>
</protein>
<gene>
    <name evidence="1" type="primary">trpA</name>
    <name type="ordered locus">Lxx11300</name>
</gene>
<comment type="function">
    <text evidence="1">The alpha subunit is responsible for the aldol cleavage of indoleglycerol phosphate to indole and glyceraldehyde 3-phosphate.</text>
</comment>
<comment type="catalytic activity">
    <reaction evidence="1">
        <text>(1S,2R)-1-C-(indol-3-yl)glycerol 3-phosphate + L-serine = D-glyceraldehyde 3-phosphate + L-tryptophan + H2O</text>
        <dbReference type="Rhea" id="RHEA:10532"/>
        <dbReference type="ChEBI" id="CHEBI:15377"/>
        <dbReference type="ChEBI" id="CHEBI:33384"/>
        <dbReference type="ChEBI" id="CHEBI:57912"/>
        <dbReference type="ChEBI" id="CHEBI:58866"/>
        <dbReference type="ChEBI" id="CHEBI:59776"/>
        <dbReference type="EC" id="4.2.1.20"/>
    </reaction>
</comment>
<comment type="pathway">
    <text evidence="1">Amino-acid biosynthesis; L-tryptophan biosynthesis; L-tryptophan from chorismate: step 5/5.</text>
</comment>
<comment type="subunit">
    <text evidence="1">Tetramer of two alpha and two beta chains.</text>
</comment>
<comment type="similarity">
    <text evidence="1">Belongs to the TrpA family.</text>
</comment>
<organism>
    <name type="scientific">Leifsonia xyli subsp. xyli (strain CTCB07)</name>
    <dbReference type="NCBI Taxonomy" id="281090"/>
    <lineage>
        <taxon>Bacteria</taxon>
        <taxon>Bacillati</taxon>
        <taxon>Actinomycetota</taxon>
        <taxon>Actinomycetes</taxon>
        <taxon>Micrococcales</taxon>
        <taxon>Microbacteriaceae</taxon>
        <taxon>Leifsonia</taxon>
    </lineage>
</organism>
<proteinExistence type="inferred from homology"/>
<dbReference type="EC" id="4.2.1.20" evidence="1"/>
<dbReference type="EMBL" id="AE016822">
    <property type="protein sequence ID" value="AAT88979.1"/>
    <property type="molecule type" value="Genomic_DNA"/>
</dbReference>
<dbReference type="RefSeq" id="WP_011185975.1">
    <property type="nucleotide sequence ID" value="NC_006087.1"/>
</dbReference>
<dbReference type="SMR" id="Q6AF66"/>
<dbReference type="STRING" id="281090.Lxx11300"/>
<dbReference type="KEGG" id="lxx:Lxx11300"/>
<dbReference type="eggNOG" id="COG0159">
    <property type="taxonomic scope" value="Bacteria"/>
</dbReference>
<dbReference type="HOGENOM" id="CLU_016734_0_0_11"/>
<dbReference type="UniPathway" id="UPA00035">
    <property type="reaction ID" value="UER00044"/>
</dbReference>
<dbReference type="Proteomes" id="UP000001306">
    <property type="component" value="Chromosome"/>
</dbReference>
<dbReference type="GO" id="GO:0005829">
    <property type="term" value="C:cytosol"/>
    <property type="evidence" value="ECO:0007669"/>
    <property type="project" value="TreeGrafter"/>
</dbReference>
<dbReference type="GO" id="GO:0004834">
    <property type="term" value="F:tryptophan synthase activity"/>
    <property type="evidence" value="ECO:0007669"/>
    <property type="project" value="UniProtKB-UniRule"/>
</dbReference>
<dbReference type="CDD" id="cd04724">
    <property type="entry name" value="Tryptophan_synthase_alpha"/>
    <property type="match status" value="1"/>
</dbReference>
<dbReference type="FunFam" id="3.20.20.70:FF:000037">
    <property type="entry name" value="Tryptophan synthase alpha chain"/>
    <property type="match status" value="1"/>
</dbReference>
<dbReference type="Gene3D" id="3.20.20.70">
    <property type="entry name" value="Aldolase class I"/>
    <property type="match status" value="1"/>
</dbReference>
<dbReference type="HAMAP" id="MF_00131">
    <property type="entry name" value="Trp_synth_alpha"/>
    <property type="match status" value="1"/>
</dbReference>
<dbReference type="InterPro" id="IPR013785">
    <property type="entry name" value="Aldolase_TIM"/>
</dbReference>
<dbReference type="InterPro" id="IPR011060">
    <property type="entry name" value="RibuloseP-bd_barrel"/>
</dbReference>
<dbReference type="InterPro" id="IPR018204">
    <property type="entry name" value="Trp_synthase_alpha_AS"/>
</dbReference>
<dbReference type="InterPro" id="IPR002028">
    <property type="entry name" value="Trp_synthase_suA"/>
</dbReference>
<dbReference type="NCBIfam" id="TIGR00262">
    <property type="entry name" value="trpA"/>
    <property type="match status" value="1"/>
</dbReference>
<dbReference type="PANTHER" id="PTHR43406:SF1">
    <property type="entry name" value="TRYPTOPHAN SYNTHASE ALPHA CHAIN, CHLOROPLASTIC"/>
    <property type="match status" value="1"/>
</dbReference>
<dbReference type="PANTHER" id="PTHR43406">
    <property type="entry name" value="TRYPTOPHAN SYNTHASE, ALPHA CHAIN"/>
    <property type="match status" value="1"/>
</dbReference>
<dbReference type="Pfam" id="PF00290">
    <property type="entry name" value="Trp_syntA"/>
    <property type="match status" value="1"/>
</dbReference>
<dbReference type="SUPFAM" id="SSF51366">
    <property type="entry name" value="Ribulose-phoshate binding barrel"/>
    <property type="match status" value="1"/>
</dbReference>
<dbReference type="PROSITE" id="PS00167">
    <property type="entry name" value="TRP_SYNTHASE_ALPHA"/>
    <property type="match status" value="1"/>
</dbReference>
<keyword id="KW-0028">Amino-acid biosynthesis</keyword>
<keyword id="KW-0057">Aromatic amino acid biosynthesis</keyword>
<keyword id="KW-0456">Lyase</keyword>
<keyword id="KW-1185">Reference proteome</keyword>
<keyword id="KW-0822">Tryptophan biosynthesis</keyword>
<feature type="chain" id="PRO_0000098799" description="Tryptophan synthase alpha chain">
    <location>
        <begin position="1"/>
        <end position="261"/>
    </location>
</feature>
<feature type="active site" description="Proton acceptor" evidence="1">
    <location>
        <position position="49"/>
    </location>
</feature>
<feature type="active site" description="Proton acceptor" evidence="1">
    <location>
        <position position="60"/>
    </location>
</feature>
<evidence type="ECO:0000255" key="1">
    <source>
        <dbReference type="HAMAP-Rule" id="MF_00131"/>
    </source>
</evidence>